<dbReference type="EMBL" id="AF064601">
    <property type="protein sequence ID" value="AAC35794.1"/>
    <property type="molecule type" value="mRNA"/>
</dbReference>
<dbReference type="RefSeq" id="NP_001079149.1">
    <property type="nucleotide sequence ID" value="NM_001085680.1"/>
</dbReference>
<dbReference type="SMR" id="O93528"/>
<dbReference type="GeneID" id="373698"/>
<dbReference type="KEGG" id="xla:373698"/>
<dbReference type="AGR" id="Xenbase:XB-GENE-6252856"/>
<dbReference type="CTD" id="373698"/>
<dbReference type="Xenbase" id="XB-GENE-6252856">
    <property type="gene designation" value="vax1.S"/>
</dbReference>
<dbReference type="OrthoDB" id="6159439at2759"/>
<dbReference type="Proteomes" id="UP000186698">
    <property type="component" value="Chromosome 7S"/>
</dbReference>
<dbReference type="Bgee" id="373698">
    <property type="expression patterns" value="Expressed in brain and 1 other cell type or tissue"/>
</dbReference>
<dbReference type="GO" id="GO:0005634">
    <property type="term" value="C:nucleus"/>
    <property type="evidence" value="ECO:0000318"/>
    <property type="project" value="GO_Central"/>
</dbReference>
<dbReference type="GO" id="GO:0000981">
    <property type="term" value="F:DNA-binding transcription factor activity, RNA polymerase II-specific"/>
    <property type="evidence" value="ECO:0000318"/>
    <property type="project" value="GO_Central"/>
</dbReference>
<dbReference type="GO" id="GO:0000978">
    <property type="term" value="F:RNA polymerase II cis-regulatory region sequence-specific DNA binding"/>
    <property type="evidence" value="ECO:0000318"/>
    <property type="project" value="GO_Central"/>
</dbReference>
<dbReference type="GO" id="GO:0007420">
    <property type="term" value="P:brain development"/>
    <property type="evidence" value="ECO:0000318"/>
    <property type="project" value="GO_Central"/>
</dbReference>
<dbReference type="GO" id="GO:0007417">
    <property type="term" value="P:central nervous system development"/>
    <property type="evidence" value="ECO:0000318"/>
    <property type="project" value="GO_Central"/>
</dbReference>
<dbReference type="GO" id="GO:0030182">
    <property type="term" value="P:neuron differentiation"/>
    <property type="evidence" value="ECO:0000318"/>
    <property type="project" value="GO_Central"/>
</dbReference>
<dbReference type="GO" id="GO:0006357">
    <property type="term" value="P:regulation of transcription by RNA polymerase II"/>
    <property type="evidence" value="ECO:0000318"/>
    <property type="project" value="GO_Central"/>
</dbReference>
<dbReference type="CDD" id="cd00086">
    <property type="entry name" value="homeodomain"/>
    <property type="match status" value="1"/>
</dbReference>
<dbReference type="FunFam" id="1.10.10.60:FF:000375">
    <property type="entry name" value="Ventral anterior homeobox 1"/>
    <property type="match status" value="1"/>
</dbReference>
<dbReference type="Gene3D" id="1.10.10.60">
    <property type="entry name" value="Homeodomain-like"/>
    <property type="match status" value="1"/>
</dbReference>
<dbReference type="InterPro" id="IPR050877">
    <property type="entry name" value="EMX-VAX-Noto_Homeobox_TFs"/>
</dbReference>
<dbReference type="InterPro" id="IPR001356">
    <property type="entry name" value="HD"/>
</dbReference>
<dbReference type="InterPro" id="IPR017970">
    <property type="entry name" value="Homeobox_CS"/>
</dbReference>
<dbReference type="InterPro" id="IPR009057">
    <property type="entry name" value="Homeodomain-like_sf"/>
</dbReference>
<dbReference type="PANTHER" id="PTHR24339">
    <property type="entry name" value="HOMEOBOX PROTEIN EMX-RELATED"/>
    <property type="match status" value="1"/>
</dbReference>
<dbReference type="PANTHER" id="PTHR24339:SF32">
    <property type="entry name" value="VENTRAL ANTERIOR HOMEOBOX 1"/>
    <property type="match status" value="1"/>
</dbReference>
<dbReference type="Pfam" id="PF00046">
    <property type="entry name" value="Homeodomain"/>
    <property type="match status" value="1"/>
</dbReference>
<dbReference type="SMART" id="SM00389">
    <property type="entry name" value="HOX"/>
    <property type="match status" value="1"/>
</dbReference>
<dbReference type="SUPFAM" id="SSF46689">
    <property type="entry name" value="Homeodomain-like"/>
    <property type="match status" value="1"/>
</dbReference>
<dbReference type="PROSITE" id="PS00027">
    <property type="entry name" value="HOMEOBOX_1"/>
    <property type="match status" value="1"/>
</dbReference>
<dbReference type="PROSITE" id="PS50071">
    <property type="entry name" value="HOMEOBOX_2"/>
    <property type="match status" value="1"/>
</dbReference>
<accession>O93528</accession>
<comment type="function">
    <text evidence="3">May play a role in the specification and maintenance of basal forebrain identity.</text>
</comment>
<comment type="subcellular location">
    <subcellularLocation>
        <location evidence="1">Nucleus</location>
    </subcellularLocation>
</comment>
<comment type="developmental stage">
    <text evidence="3">First detectable at early gastrula stages. Expressed in the anterior-most region of the open neural plate and midanterior and midlateral anterior ridge. By late neurula stages, expressed in the derivatives of these regions namely, in the anterior and rostral ventrolateral part of the forebrain neuroepithelium, primordium striatum, optic stalk, chiasmatic ridge and the anterior hypothalamus. At tailbud stages the expression extends laterally and caudally with the enlargement of the forebrain ventricle. Expression in the tadpole stage embryos is specific to the optic disk, optic stalk and anterior hypothalamus.</text>
</comment>
<comment type="similarity">
    <text evidence="4">Belongs to the EMX homeobox family.</text>
</comment>
<keyword id="KW-0217">Developmental protein</keyword>
<keyword id="KW-0238">DNA-binding</keyword>
<keyword id="KW-0371">Homeobox</keyword>
<keyword id="KW-0539">Nucleus</keyword>
<keyword id="KW-1185">Reference proteome</keyword>
<keyword id="KW-0804">Transcription</keyword>
<keyword id="KW-0805">Transcription regulation</keyword>
<proteinExistence type="evidence at transcript level"/>
<reference key="1">
    <citation type="journal article" date="1998" name="Development">
        <title>Vax1 is a novel homeobox-containing gene expressed in the developing anterior ventral forebrain.</title>
        <authorList>
            <person name="Hallonet M."/>
            <person name="Hollemann T."/>
            <person name="Wehr R."/>
            <person name="Jenkins N.A."/>
            <person name="Copeland N.G."/>
            <person name="Pieler T."/>
            <person name="Gruss P."/>
        </authorList>
    </citation>
    <scope>NUCLEOTIDE SEQUENCE [MRNA]</scope>
    <scope>FUNCTION</scope>
    <scope>DEVELOPMENTAL STAGE</scope>
    <source>
        <tissue>Head</tissue>
    </source>
</reference>
<sequence>MFEKTTDMDIRCNIEENGRISKPKDNKEIRETQAKMPSTYLKEQPGTYPAPGSSELCAKNKSSSAGDPEYCRRILVRDAKGSIREIILPKGLDLDRPKRSRTSFTAEQLYRLEMEFQRCQYVVGRERTDLSRQLNLSETQVKVWFQNRRTKQKKDQGKDSELRSVVSETAATCSVLRLLEQGRLLSPPGLPGLMPPCTTGTLRAPNSSGPGTRSLATVTSTPPHQPGLHPSPTGHNIFNMPVPSLLGTVANRLSSHPLTMAGNLHELSARYLSSSAFEPYSRSISKDSLDKKLLD</sequence>
<evidence type="ECO:0000255" key="1">
    <source>
        <dbReference type="PROSITE-ProRule" id="PRU00108"/>
    </source>
</evidence>
<evidence type="ECO:0000256" key="2">
    <source>
        <dbReference type="SAM" id="MobiDB-lite"/>
    </source>
</evidence>
<evidence type="ECO:0000269" key="3">
    <source>
    </source>
</evidence>
<evidence type="ECO:0000305" key="4"/>
<protein>
    <recommendedName>
        <fullName>Ventral anterior homeobox 1a</fullName>
    </recommendedName>
</protein>
<feature type="chain" id="PRO_0000240527" description="Ventral anterior homeobox 1a">
    <location>
        <begin position="1"/>
        <end position="295"/>
    </location>
</feature>
<feature type="DNA-binding region" description="Homeobox" evidence="1">
    <location>
        <begin position="97"/>
        <end position="156"/>
    </location>
</feature>
<feature type="region of interest" description="Disordered" evidence="2">
    <location>
        <begin position="20"/>
        <end position="63"/>
    </location>
</feature>
<feature type="region of interest" description="Disordered" evidence="2">
    <location>
        <begin position="203"/>
        <end position="226"/>
    </location>
</feature>
<feature type="compositionally biased region" description="Basic and acidic residues" evidence="2">
    <location>
        <begin position="20"/>
        <end position="33"/>
    </location>
</feature>
<feature type="compositionally biased region" description="Polar residues" evidence="2">
    <location>
        <begin position="204"/>
        <end position="222"/>
    </location>
</feature>
<name>VAX1A_XENLA</name>
<gene>
    <name type="primary">vax1-a</name>
</gene>
<organism>
    <name type="scientific">Xenopus laevis</name>
    <name type="common">African clawed frog</name>
    <dbReference type="NCBI Taxonomy" id="8355"/>
    <lineage>
        <taxon>Eukaryota</taxon>
        <taxon>Metazoa</taxon>
        <taxon>Chordata</taxon>
        <taxon>Craniata</taxon>
        <taxon>Vertebrata</taxon>
        <taxon>Euteleostomi</taxon>
        <taxon>Amphibia</taxon>
        <taxon>Batrachia</taxon>
        <taxon>Anura</taxon>
        <taxon>Pipoidea</taxon>
        <taxon>Pipidae</taxon>
        <taxon>Xenopodinae</taxon>
        <taxon>Xenopus</taxon>
        <taxon>Xenopus</taxon>
    </lineage>
</organism>